<accession>Q8L8M9</accession>
<accession>Q9FKI3</accession>
<reference key="1">
    <citation type="journal article" date="1998" name="DNA Res.">
        <title>Structural analysis of Arabidopsis thaliana chromosome 5. V. Sequence features of the regions of 1,381,565 bp covered by twenty one physically assigned P1 and TAC clones.</title>
        <authorList>
            <person name="Kaneko T."/>
            <person name="Kotani H."/>
            <person name="Nakamura Y."/>
            <person name="Sato S."/>
            <person name="Asamizu E."/>
            <person name="Miyajima N."/>
            <person name="Tabata S."/>
        </authorList>
    </citation>
    <scope>NUCLEOTIDE SEQUENCE [LARGE SCALE GENOMIC DNA]</scope>
    <source>
        <strain>cv. Columbia</strain>
    </source>
</reference>
<reference key="2">
    <citation type="journal article" date="2017" name="Plant J.">
        <title>Araport11: a complete reannotation of the Arabidopsis thaliana reference genome.</title>
        <authorList>
            <person name="Cheng C.Y."/>
            <person name="Krishnakumar V."/>
            <person name="Chan A.P."/>
            <person name="Thibaud-Nissen F."/>
            <person name="Schobel S."/>
            <person name="Town C.D."/>
        </authorList>
    </citation>
    <scope>GENOME REANNOTATION</scope>
    <source>
        <strain>cv. Columbia</strain>
    </source>
</reference>
<reference key="3">
    <citation type="submission" date="2004-09" db="EMBL/GenBank/DDBJ databases">
        <title>Large-scale analysis of RIKEN Arabidopsis full-length (RAFL) cDNAs.</title>
        <authorList>
            <person name="Totoki Y."/>
            <person name="Seki M."/>
            <person name="Ishida J."/>
            <person name="Nakajima M."/>
            <person name="Enju A."/>
            <person name="Kamiya A."/>
            <person name="Narusaka M."/>
            <person name="Shin-i T."/>
            <person name="Nakagawa M."/>
            <person name="Sakamoto N."/>
            <person name="Oishi K."/>
            <person name="Kohara Y."/>
            <person name="Kobayashi M."/>
            <person name="Toyoda A."/>
            <person name="Sakaki Y."/>
            <person name="Sakurai T."/>
            <person name="Iida K."/>
            <person name="Akiyama K."/>
            <person name="Satou M."/>
            <person name="Toyoda T."/>
            <person name="Konagaya A."/>
            <person name="Carninci P."/>
            <person name="Kawai J."/>
            <person name="Hayashizaki Y."/>
            <person name="Shinozaki K."/>
        </authorList>
    </citation>
    <scope>NUCLEOTIDE SEQUENCE [LARGE SCALE MRNA]</scope>
    <source>
        <strain>cv. Columbia</strain>
    </source>
</reference>
<reference key="4">
    <citation type="submission" date="2002-03" db="EMBL/GenBank/DDBJ databases">
        <title>Full-length cDNA from Arabidopsis thaliana.</title>
        <authorList>
            <person name="Brover V.V."/>
            <person name="Troukhan M.E."/>
            <person name="Alexandrov N.A."/>
            <person name="Lu Y.-P."/>
            <person name="Flavell R.B."/>
            <person name="Feldmann K.A."/>
        </authorList>
    </citation>
    <scope>NUCLEOTIDE SEQUENCE [LARGE SCALE MRNA]</scope>
</reference>
<reference key="5">
    <citation type="journal article" date="2005" name="BMC Evol. Biol.">
        <title>Genome-wide comparative analysis of the IQD gene families in Arabidopsis thaliana and Oryza sativa.</title>
        <authorList>
            <person name="Abel S."/>
            <person name="Savchenko T."/>
            <person name="Levy M."/>
        </authorList>
    </citation>
    <scope>INTERACTION WITH CALMODULIN</scope>
    <scope>GENE FAMILY</scope>
    <scope>NOMENCLATURE</scope>
    <source>
        <strain>cv. Columbia</strain>
    </source>
</reference>
<reference key="6">
    <citation type="journal article" date="2017" name="Plant Physiol.">
        <title>The IQD family of calmodulin-binding proteins links calcium signaling to microtubules, membrane subdomains, and the nucleus.</title>
        <authorList>
            <person name="Buerstenbinder K."/>
            <person name="Moeller B."/>
            <person name="Ploetner R."/>
            <person name="Stamm G."/>
            <person name="Hause G."/>
            <person name="Mitra D."/>
            <person name="Abel S."/>
        </authorList>
    </citation>
    <scope>SUBCELLULAR LOCATION</scope>
    <scope>INTERACTION WITH CALMODULIN</scope>
    <source>
        <strain>cv. Columbia</strain>
    </source>
</reference>
<reference key="7">
    <citation type="journal article" date="2017" name="Plant Signal. Behav.">
        <title>Functions of IQD proteins as hubs in cellular calcium and auxin signaling: A toolbox for shape formation and tissue-specification in plants?</title>
        <authorList>
            <person name="Buerstenbinder K."/>
            <person name="Mitra D."/>
            <person name="Quegwer J."/>
        </authorList>
    </citation>
    <scope>REVIEW</scope>
</reference>
<proteinExistence type="evidence at protein level"/>
<gene>
    <name evidence="6" type="primary">IQD33</name>
    <name evidence="8" type="ordered locus">At5g35670</name>
    <name evidence="9" type="ORF">MXH1.1</name>
</gene>
<name>IQD33_ARATH</name>
<feature type="chain" id="PRO_0000453136" description="Protein IQ-DOMAIN 33">
    <location>
        <begin position="1"/>
        <end position="442"/>
    </location>
</feature>
<feature type="domain" description="IQ" evidence="2">
    <location>
        <begin position="159"/>
        <end position="188"/>
    </location>
</feature>
<feature type="region of interest" description="Disordered" evidence="4">
    <location>
        <begin position="184"/>
        <end position="212"/>
    </location>
</feature>
<feature type="region of interest" description="Calmodulin-binding" evidence="6">
    <location>
        <begin position="270"/>
        <end position="282"/>
    </location>
</feature>
<feature type="region of interest" description="Disordered" evidence="4">
    <location>
        <begin position="375"/>
        <end position="442"/>
    </location>
</feature>
<feature type="short sequence motif" description="Nuclear localization signal" evidence="3">
    <location>
        <begin position="385"/>
        <end position="392"/>
    </location>
</feature>
<feature type="compositionally biased region" description="Polar residues" evidence="4">
    <location>
        <begin position="199"/>
        <end position="212"/>
    </location>
</feature>
<feature type="compositionally biased region" description="Basic residues" evidence="4">
    <location>
        <begin position="383"/>
        <end position="402"/>
    </location>
</feature>
<organism>
    <name type="scientific">Arabidopsis thaliana</name>
    <name type="common">Mouse-ear cress</name>
    <dbReference type="NCBI Taxonomy" id="3702"/>
    <lineage>
        <taxon>Eukaryota</taxon>
        <taxon>Viridiplantae</taxon>
        <taxon>Streptophyta</taxon>
        <taxon>Embryophyta</taxon>
        <taxon>Tracheophyta</taxon>
        <taxon>Spermatophyta</taxon>
        <taxon>Magnoliopsida</taxon>
        <taxon>eudicotyledons</taxon>
        <taxon>Gunneridae</taxon>
        <taxon>Pentapetalae</taxon>
        <taxon>rosids</taxon>
        <taxon>malvids</taxon>
        <taxon>Brassicales</taxon>
        <taxon>Brassicaceae</taxon>
        <taxon>Camelineae</taxon>
        <taxon>Arabidopsis</taxon>
    </lineage>
</organism>
<evidence type="ECO:0000250" key="1">
    <source>
        <dbReference type="UniProtKB" id="Q9SF32"/>
    </source>
</evidence>
<evidence type="ECO:0000255" key="2">
    <source>
        <dbReference type="PROSITE-ProRule" id="PRU00116"/>
    </source>
</evidence>
<evidence type="ECO:0000255" key="3">
    <source>
        <dbReference type="PROSITE-ProRule" id="PRU00768"/>
    </source>
</evidence>
<evidence type="ECO:0000256" key="4">
    <source>
        <dbReference type="SAM" id="MobiDB-lite"/>
    </source>
</evidence>
<evidence type="ECO:0000269" key="5">
    <source>
    </source>
</evidence>
<evidence type="ECO:0000303" key="6">
    <source>
    </source>
</evidence>
<evidence type="ECO:0000305" key="7"/>
<evidence type="ECO:0000312" key="8">
    <source>
        <dbReference type="Araport" id="AT5G35670"/>
    </source>
</evidence>
<evidence type="ECO:0000312" key="9">
    <source>
        <dbReference type="EMBL" id="BAB09264.1"/>
    </source>
</evidence>
<comment type="function">
    <text evidence="1">May be involved in cooperative interactions with calmodulins or calmodulin-like proteins (By similarity). Recruits calmodulin proteins to microtubules, thus being a potential scaffold in cellular signaling and trafficking (By similarity). May associate with nucleic acids and regulate gene expression at the transcriptional or post-transcriptional level (By similarity).</text>
</comment>
<comment type="subunit">
    <text evidence="1">Binds to multiple calmodulin (CaM) in the presence of Ca(2+) and CaM-like proteins.</text>
</comment>
<comment type="subcellular location">
    <subcellularLocation>
        <location evidence="3 5">Nucleus</location>
    </subcellularLocation>
    <text evidence="5">Recruits calmodulin (CaM2) at the nucleus.</text>
</comment>
<comment type="similarity">
    <text evidence="7">Belongs to the IQD family.</text>
</comment>
<comment type="sequence caution" evidence="7">
    <conflict type="erroneous gene model prediction">
        <sequence resource="EMBL-CDS" id="BAB09264"/>
    </conflict>
</comment>
<dbReference type="EMBL" id="AB011485">
    <property type="protein sequence ID" value="BAB09264.1"/>
    <property type="status" value="ALT_SEQ"/>
    <property type="molecule type" value="Genomic_DNA"/>
</dbReference>
<dbReference type="EMBL" id="CP002688">
    <property type="protein sequence ID" value="AED93999.1"/>
    <property type="molecule type" value="Genomic_DNA"/>
</dbReference>
<dbReference type="EMBL" id="AK175704">
    <property type="protein sequence ID" value="BAD43467.1"/>
    <property type="molecule type" value="mRNA"/>
</dbReference>
<dbReference type="EMBL" id="AY088904">
    <property type="protein sequence ID" value="AAM67210.1"/>
    <property type="molecule type" value="mRNA"/>
</dbReference>
<dbReference type="RefSeq" id="NP_568529.1">
    <property type="nucleotide sequence ID" value="NM_122958.4"/>
</dbReference>
<dbReference type="FunCoup" id="Q8L8M9">
    <property type="interactions" value="418"/>
</dbReference>
<dbReference type="STRING" id="3702.Q8L8M9"/>
<dbReference type="iPTMnet" id="Q8L8M9"/>
<dbReference type="PaxDb" id="3702-AT5G35670.1"/>
<dbReference type="ProteomicsDB" id="191526"/>
<dbReference type="EnsemblPlants" id="AT5G35670.1">
    <property type="protein sequence ID" value="AT5G35670.1"/>
    <property type="gene ID" value="AT5G35670"/>
</dbReference>
<dbReference type="GeneID" id="833540"/>
<dbReference type="Gramene" id="AT5G35670.1">
    <property type="protein sequence ID" value="AT5G35670.1"/>
    <property type="gene ID" value="AT5G35670"/>
</dbReference>
<dbReference type="KEGG" id="ath:AT5G35670"/>
<dbReference type="Araport" id="AT5G35670"/>
<dbReference type="TAIR" id="AT5G35670">
    <property type="gene designation" value="IQD33"/>
</dbReference>
<dbReference type="eggNOG" id="ENOG502QSU8">
    <property type="taxonomic scope" value="Eukaryota"/>
</dbReference>
<dbReference type="HOGENOM" id="CLU_059472_0_0_1"/>
<dbReference type="InParanoid" id="Q8L8M9"/>
<dbReference type="OMA" id="ANMSWSW"/>
<dbReference type="PhylomeDB" id="Q8L8M9"/>
<dbReference type="PRO" id="PR:Q8L8M9"/>
<dbReference type="Proteomes" id="UP000006548">
    <property type="component" value="Chromosome 5"/>
</dbReference>
<dbReference type="ExpressionAtlas" id="Q8L8M9">
    <property type="expression patterns" value="baseline and differential"/>
</dbReference>
<dbReference type="GO" id="GO:0005634">
    <property type="term" value="C:nucleus"/>
    <property type="evidence" value="ECO:0007669"/>
    <property type="project" value="UniProtKB-SubCell"/>
</dbReference>
<dbReference type="GO" id="GO:0005516">
    <property type="term" value="F:calmodulin binding"/>
    <property type="evidence" value="ECO:0007669"/>
    <property type="project" value="UniProtKB-KW"/>
</dbReference>
<dbReference type="InterPro" id="IPR000048">
    <property type="entry name" value="IQ_motif_EF-hand-BS"/>
</dbReference>
<dbReference type="PANTHER" id="PTHR32295">
    <property type="entry name" value="IQ-DOMAIN 5-RELATED"/>
    <property type="match status" value="1"/>
</dbReference>
<dbReference type="PANTHER" id="PTHR32295:SF15">
    <property type="entry name" value="PROTEIN IQ-DOMAIN 33"/>
    <property type="match status" value="1"/>
</dbReference>
<dbReference type="Pfam" id="PF00612">
    <property type="entry name" value="IQ"/>
    <property type="match status" value="1"/>
</dbReference>
<dbReference type="PROSITE" id="PS50096">
    <property type="entry name" value="IQ"/>
    <property type="match status" value="1"/>
</dbReference>
<protein>
    <recommendedName>
        <fullName evidence="6">Protein IQ-DOMAIN 33</fullName>
        <shortName evidence="6">AtIQD33</shortName>
    </recommendedName>
</protein>
<keyword id="KW-0112">Calmodulin-binding</keyword>
<keyword id="KW-0539">Nucleus</keyword>
<keyword id="KW-1185">Reference proteome</keyword>
<sequence>MGVTGGLVRSIFFRNKSFGAHDYNNGRGNLGEKKRWSSVRSYLCGDEFNSVRAVNDSESIKDSEALLTMSQQLSSEFGMPFGSVIAIEDSASVRHLEDEDSGSVKSSEATVTQPLLEEKSKGLDCYLKEEDVEDNQSEATETHIPKKHQTTPISKLFLEEDAAVIIQSAFRSYLAIRRSKEEEETFAKEESFSGEESQDNASMGTSLEAQTGNSVKAPFFRRKRVSANRRTLQKNNTQVLRIKEDWDDSTVSSTISKSRIQSRVEAMTKRERALAYAFSQQLRICSKKKQIDRSSEDDSNIGWSWLERWMATRVPDSIPIEPRTDVATKNQSLIRKNRAFGTAGELESCASNDLPLHFESISETQGDATTVLQTEKSSFKPSISKRKSVPSYKSQRKHHKLQATKSDLQQQTKKAKKAKTTPTSCKTGNECEETSHKLNSST</sequence>